<sequence>MGDTDVTSDANAPWLIVGLGNPGPEYARNRHNVGFMVADLLAERIGGKFKRAGKAQAQVIEGRIGPPGPANRRVILAKPMSYMNLSGGPVNALREFYKVPVANIVAVHDELDIDYGVLRLKLGGGDNGHNGLKSMTKAMGPDYHRVRFGIGRPPGRMQVADFVLKDFASAERKELDYLVDRAADAAECLVIEGLERAQGTYNS</sequence>
<comment type="function">
    <text evidence="1">Hydrolyzes ribosome-free peptidyl-tRNAs (with 1 or more amino acids incorporated), which drop off the ribosome during protein synthesis, or as a result of ribosome stalling.</text>
</comment>
<comment type="function">
    <text evidence="1">Catalyzes the release of premature peptidyl moieties from peptidyl-tRNA molecules trapped in stalled 50S ribosomal subunits, and thus maintains levels of free tRNAs and 50S ribosomes.</text>
</comment>
<comment type="catalytic activity">
    <reaction evidence="1">
        <text>an N-acyl-L-alpha-aminoacyl-tRNA + H2O = an N-acyl-L-amino acid + a tRNA + H(+)</text>
        <dbReference type="Rhea" id="RHEA:54448"/>
        <dbReference type="Rhea" id="RHEA-COMP:10123"/>
        <dbReference type="Rhea" id="RHEA-COMP:13883"/>
        <dbReference type="ChEBI" id="CHEBI:15377"/>
        <dbReference type="ChEBI" id="CHEBI:15378"/>
        <dbReference type="ChEBI" id="CHEBI:59874"/>
        <dbReference type="ChEBI" id="CHEBI:78442"/>
        <dbReference type="ChEBI" id="CHEBI:138191"/>
        <dbReference type="EC" id="3.1.1.29"/>
    </reaction>
</comment>
<comment type="subunit">
    <text evidence="1">Monomer.</text>
</comment>
<comment type="subcellular location">
    <subcellularLocation>
        <location evidence="1">Cytoplasm</location>
    </subcellularLocation>
</comment>
<comment type="similarity">
    <text evidence="1">Belongs to the PTH family.</text>
</comment>
<accession>Q82HE5</accession>
<gene>
    <name evidence="1" type="primary">pth</name>
    <name type="ordered locus">SAV_3564</name>
</gene>
<protein>
    <recommendedName>
        <fullName evidence="1">Peptidyl-tRNA hydrolase</fullName>
        <shortName evidence="1">Pth</shortName>
        <ecNumber evidence="1">3.1.1.29</ecNumber>
    </recommendedName>
</protein>
<evidence type="ECO:0000255" key="1">
    <source>
        <dbReference type="HAMAP-Rule" id="MF_00083"/>
    </source>
</evidence>
<dbReference type="EC" id="3.1.1.29" evidence="1"/>
<dbReference type="EMBL" id="BA000030">
    <property type="protein sequence ID" value="BAC71276.1"/>
    <property type="molecule type" value="Genomic_DNA"/>
</dbReference>
<dbReference type="RefSeq" id="WP_010984995.1">
    <property type="nucleotide sequence ID" value="NZ_JZJK01000090.1"/>
</dbReference>
<dbReference type="SMR" id="Q82HE5"/>
<dbReference type="GeneID" id="41540629"/>
<dbReference type="KEGG" id="sma:SAVERM_3564"/>
<dbReference type="eggNOG" id="COG0193">
    <property type="taxonomic scope" value="Bacteria"/>
</dbReference>
<dbReference type="HOGENOM" id="CLU_062456_2_2_11"/>
<dbReference type="OrthoDB" id="9800507at2"/>
<dbReference type="Proteomes" id="UP000000428">
    <property type="component" value="Chromosome"/>
</dbReference>
<dbReference type="GO" id="GO:0005737">
    <property type="term" value="C:cytoplasm"/>
    <property type="evidence" value="ECO:0007669"/>
    <property type="project" value="UniProtKB-SubCell"/>
</dbReference>
<dbReference type="GO" id="GO:0004045">
    <property type="term" value="F:peptidyl-tRNA hydrolase activity"/>
    <property type="evidence" value="ECO:0007669"/>
    <property type="project" value="UniProtKB-UniRule"/>
</dbReference>
<dbReference type="GO" id="GO:0000049">
    <property type="term" value="F:tRNA binding"/>
    <property type="evidence" value="ECO:0007669"/>
    <property type="project" value="UniProtKB-UniRule"/>
</dbReference>
<dbReference type="GO" id="GO:0006515">
    <property type="term" value="P:protein quality control for misfolded or incompletely synthesized proteins"/>
    <property type="evidence" value="ECO:0007669"/>
    <property type="project" value="UniProtKB-UniRule"/>
</dbReference>
<dbReference type="GO" id="GO:0072344">
    <property type="term" value="P:rescue of stalled ribosome"/>
    <property type="evidence" value="ECO:0007669"/>
    <property type="project" value="UniProtKB-UniRule"/>
</dbReference>
<dbReference type="CDD" id="cd00462">
    <property type="entry name" value="PTH"/>
    <property type="match status" value="1"/>
</dbReference>
<dbReference type="FunFam" id="3.40.50.1470:FF:000001">
    <property type="entry name" value="Peptidyl-tRNA hydrolase"/>
    <property type="match status" value="1"/>
</dbReference>
<dbReference type="Gene3D" id="3.40.50.1470">
    <property type="entry name" value="Peptidyl-tRNA hydrolase"/>
    <property type="match status" value="1"/>
</dbReference>
<dbReference type="HAMAP" id="MF_00083">
    <property type="entry name" value="Pept_tRNA_hydro_bact"/>
    <property type="match status" value="1"/>
</dbReference>
<dbReference type="InterPro" id="IPR001328">
    <property type="entry name" value="Pept_tRNA_hydro"/>
</dbReference>
<dbReference type="InterPro" id="IPR018171">
    <property type="entry name" value="Pept_tRNA_hydro_CS"/>
</dbReference>
<dbReference type="InterPro" id="IPR036416">
    <property type="entry name" value="Pept_tRNA_hydro_sf"/>
</dbReference>
<dbReference type="NCBIfam" id="TIGR00447">
    <property type="entry name" value="pth"/>
    <property type="match status" value="1"/>
</dbReference>
<dbReference type="PANTHER" id="PTHR17224">
    <property type="entry name" value="PEPTIDYL-TRNA HYDROLASE"/>
    <property type="match status" value="1"/>
</dbReference>
<dbReference type="PANTHER" id="PTHR17224:SF1">
    <property type="entry name" value="PEPTIDYL-TRNA HYDROLASE"/>
    <property type="match status" value="1"/>
</dbReference>
<dbReference type="Pfam" id="PF01195">
    <property type="entry name" value="Pept_tRNA_hydro"/>
    <property type="match status" value="1"/>
</dbReference>
<dbReference type="SUPFAM" id="SSF53178">
    <property type="entry name" value="Peptidyl-tRNA hydrolase-like"/>
    <property type="match status" value="1"/>
</dbReference>
<dbReference type="PROSITE" id="PS01195">
    <property type="entry name" value="PEPT_TRNA_HYDROL_1"/>
    <property type="match status" value="1"/>
</dbReference>
<dbReference type="PROSITE" id="PS01196">
    <property type="entry name" value="PEPT_TRNA_HYDROL_2"/>
    <property type="match status" value="1"/>
</dbReference>
<feature type="chain" id="PRO_0000187825" description="Peptidyl-tRNA hydrolase">
    <location>
        <begin position="1"/>
        <end position="203"/>
    </location>
</feature>
<feature type="active site" description="Proton acceptor" evidence="1">
    <location>
        <position position="31"/>
    </location>
</feature>
<feature type="binding site" evidence="1">
    <location>
        <position position="26"/>
    </location>
    <ligand>
        <name>tRNA</name>
        <dbReference type="ChEBI" id="CHEBI:17843"/>
    </ligand>
</feature>
<feature type="binding site" evidence="1">
    <location>
        <position position="82"/>
    </location>
    <ligand>
        <name>tRNA</name>
        <dbReference type="ChEBI" id="CHEBI:17843"/>
    </ligand>
</feature>
<feature type="binding site" evidence="1">
    <location>
        <position position="84"/>
    </location>
    <ligand>
        <name>tRNA</name>
        <dbReference type="ChEBI" id="CHEBI:17843"/>
    </ligand>
</feature>
<feature type="binding site" evidence="1">
    <location>
        <position position="130"/>
    </location>
    <ligand>
        <name>tRNA</name>
        <dbReference type="ChEBI" id="CHEBI:17843"/>
    </ligand>
</feature>
<feature type="site" description="Discriminates between blocked and unblocked aminoacyl-tRNA" evidence="1">
    <location>
        <position position="21"/>
    </location>
</feature>
<feature type="site" description="Stabilizes the basic form of H active site to accept a proton" evidence="1">
    <location>
        <position position="109"/>
    </location>
</feature>
<name>PTH_STRAW</name>
<reference key="1">
    <citation type="journal article" date="2001" name="Proc. Natl. Acad. Sci. U.S.A.">
        <title>Genome sequence of an industrial microorganism Streptomyces avermitilis: deducing the ability of producing secondary metabolites.</title>
        <authorList>
            <person name="Omura S."/>
            <person name="Ikeda H."/>
            <person name="Ishikawa J."/>
            <person name="Hanamoto A."/>
            <person name="Takahashi C."/>
            <person name="Shinose M."/>
            <person name="Takahashi Y."/>
            <person name="Horikawa H."/>
            <person name="Nakazawa H."/>
            <person name="Osonoe T."/>
            <person name="Kikuchi H."/>
            <person name="Shiba T."/>
            <person name="Sakaki Y."/>
            <person name="Hattori M."/>
        </authorList>
    </citation>
    <scope>NUCLEOTIDE SEQUENCE [LARGE SCALE GENOMIC DNA]</scope>
    <source>
        <strain>ATCC 31267 / DSM 46492 / JCM 5070 / NBRC 14893 / NCIMB 12804 / NRRL 8165 / MA-4680</strain>
    </source>
</reference>
<reference key="2">
    <citation type="journal article" date="2003" name="Nat. Biotechnol.">
        <title>Complete genome sequence and comparative analysis of the industrial microorganism Streptomyces avermitilis.</title>
        <authorList>
            <person name="Ikeda H."/>
            <person name="Ishikawa J."/>
            <person name="Hanamoto A."/>
            <person name="Shinose M."/>
            <person name="Kikuchi H."/>
            <person name="Shiba T."/>
            <person name="Sakaki Y."/>
            <person name="Hattori M."/>
            <person name="Omura S."/>
        </authorList>
    </citation>
    <scope>NUCLEOTIDE SEQUENCE [LARGE SCALE GENOMIC DNA]</scope>
    <source>
        <strain>ATCC 31267 / DSM 46492 / JCM 5070 / NBRC 14893 / NCIMB 12804 / NRRL 8165 / MA-4680</strain>
    </source>
</reference>
<organism>
    <name type="scientific">Streptomyces avermitilis (strain ATCC 31267 / DSM 46492 / JCM 5070 / NBRC 14893 / NCIMB 12804 / NRRL 8165 / MA-4680)</name>
    <dbReference type="NCBI Taxonomy" id="227882"/>
    <lineage>
        <taxon>Bacteria</taxon>
        <taxon>Bacillati</taxon>
        <taxon>Actinomycetota</taxon>
        <taxon>Actinomycetes</taxon>
        <taxon>Kitasatosporales</taxon>
        <taxon>Streptomycetaceae</taxon>
        <taxon>Streptomyces</taxon>
    </lineage>
</organism>
<keyword id="KW-0963">Cytoplasm</keyword>
<keyword id="KW-0378">Hydrolase</keyword>
<keyword id="KW-1185">Reference proteome</keyword>
<keyword id="KW-0694">RNA-binding</keyword>
<keyword id="KW-0820">tRNA-binding</keyword>
<proteinExistence type="inferred from homology"/>